<comment type="catalytic activity">
    <reaction evidence="1">
        <text>Hydrolysis of terminal non-reducing beta-D-galactose residues in beta-D-galactosides.</text>
        <dbReference type="EC" id="3.2.1.23"/>
    </reaction>
</comment>
<comment type="cofactor">
    <cofactor evidence="1">
        <name>Mg(2+)</name>
        <dbReference type="ChEBI" id="CHEBI:18420"/>
    </cofactor>
    <text evidence="1">Binds 2 magnesium ions per monomer.</text>
</comment>
<comment type="cofactor">
    <cofactor evidence="1">
        <name>Na(+)</name>
        <dbReference type="ChEBI" id="CHEBI:29101"/>
    </cofactor>
    <text evidence="1">Binds 1 sodium ion per monomer.</text>
</comment>
<comment type="subunit">
    <text evidence="1">Homotetramer.</text>
</comment>
<comment type="similarity">
    <text evidence="1">Belongs to the glycosyl hydrolase 2 family.</text>
</comment>
<proteinExistence type="inferred from homology"/>
<reference key="1">
    <citation type="journal article" date="2007" name="J. Bacteriol.">
        <title>The genome sequence of avian pathogenic Escherichia coli strain O1:K1:H7 shares strong similarities with human extraintestinal pathogenic E. coli genomes.</title>
        <authorList>
            <person name="Johnson T.J."/>
            <person name="Kariyawasam S."/>
            <person name="Wannemuehler Y."/>
            <person name="Mangiamele P."/>
            <person name="Johnson S.J."/>
            <person name="Doetkott C."/>
            <person name="Skyberg J.A."/>
            <person name="Lynne A.M."/>
            <person name="Johnson J.R."/>
            <person name="Nolan L.K."/>
        </authorList>
    </citation>
    <scope>NUCLEOTIDE SEQUENCE [LARGE SCALE GENOMIC DNA]</scope>
</reference>
<gene>
    <name evidence="1" type="primary">lacZ</name>
    <name type="ordered locus">Ecok1_03270</name>
    <name type="ORF">APECO1_1649</name>
</gene>
<evidence type="ECO:0000255" key="1">
    <source>
        <dbReference type="HAMAP-Rule" id="MF_01687"/>
    </source>
</evidence>
<protein>
    <recommendedName>
        <fullName evidence="1">Beta-galactosidase</fullName>
        <shortName evidence="1">Beta-gal</shortName>
        <ecNumber evidence="1">3.2.1.23</ecNumber>
    </recommendedName>
    <alternativeName>
        <fullName evidence="1">Lactase</fullName>
    </alternativeName>
</protein>
<keyword id="KW-0326">Glycosidase</keyword>
<keyword id="KW-0378">Hydrolase</keyword>
<keyword id="KW-0460">Magnesium</keyword>
<keyword id="KW-0479">Metal-binding</keyword>
<keyword id="KW-1185">Reference proteome</keyword>
<keyword id="KW-0915">Sodium</keyword>
<sequence>MTMITDSLAVVLQRRDWENPGVTQLNRLAAHPPFASWRNSEEARTDRPSQQLRSLNGEWRFAWFPAPEAVPESWLECDLPDADTVVVPSNWQMHGYDAPIYTNVTYPITVNPPFVPAENPTGCYSLTFNIDESWLQEGQTRIIFDGVNSAFHLWCNGRWVGYGQDSRLPSEFDLSAFLHAGENRLAVMVLRWSDGSYLEDQDMWRMSGIFRDVSLLHKPTTQISDFQVTTRFNDDFSRAVLEAEVQMYGELRDELRVTVSLWQGETQVASGTAPFGGEIIDERGGYADRVTLRLNVENPELWSAEIPNLYRAVVELHTADGTLIEAEACDVGFREVRIENGLLLLNGKPLLIRGVNRHEHHPLHGQVMDEQTMVQDILLMKQNNFNAVRCSHYPNHPLWYTLCDRYGLYVVDEANIETHGMVPMNRLTDDPRWLPAMSERVTRMVQRDRNHPSVIIWSLGNESGHGANHDALYRWIKSVDPSRPVQYEGGGADTTATDIICPMYARVDEDQPFPAVPKWSIKKWLSLPGEMRPLILCEYAHAMGNSLGGFAKYWQAFRQYPRLQGGFVWDWVDQSLIKYDENGNPWSAYGGDFGDTPNDRQFCMNGLVFADRTPHPALTEAKHQQQFFQFRLSGRTIEVTSEYLFRHSDNEFLHWMVALDGKPLASGEVPLDVGPQGKQLIELPELPQPESAGQLWLTVRVVQPNATAWSEAGHISAWQQWRLAENLSVTLPSASHAIPQLTTSGTDFCIELGNKRWQFNRQSGFLSQMWIGDEKQLLTPLRDQFTRAPLDNDIGVSEATRIDPNAWVERWKAAGHYQAEAALLQCTADTLADAVLITTAHAWQHQGKTLFISRKTYRIDGHGEMVINVDVAVASDTPHPARIGLTCQLAQVSERVNWLGLGPQENYPDRLTAACFDRWDLPLSDMYTPYVFPSENGLRCGTRELNYGPHLWRGDFQFNISRYSQQQLMETSHRHLLHAEEGTWLNIDGFHMGIGGDDSWSPSVSAEFQLSAGRYHYQLVWCQK</sequence>
<name>BGAL_ECOK1</name>
<feature type="chain" id="PRO_0000366995" description="Beta-galactosidase">
    <location>
        <begin position="1"/>
        <end position="1024"/>
    </location>
</feature>
<feature type="active site" description="Proton donor" evidence="1">
    <location>
        <position position="462"/>
    </location>
</feature>
<feature type="active site" description="Nucleophile" evidence="1">
    <location>
        <position position="538"/>
    </location>
</feature>
<feature type="binding site" evidence="1">
    <location>
        <position position="103"/>
    </location>
    <ligand>
        <name>substrate</name>
    </ligand>
</feature>
<feature type="binding site" evidence="1">
    <location>
        <position position="202"/>
    </location>
    <ligand>
        <name>Na(+)</name>
        <dbReference type="ChEBI" id="CHEBI:29101"/>
    </ligand>
</feature>
<feature type="binding site" evidence="1">
    <location>
        <position position="202"/>
    </location>
    <ligand>
        <name>substrate</name>
    </ligand>
</feature>
<feature type="binding site" evidence="1">
    <location>
        <position position="417"/>
    </location>
    <ligand>
        <name>Mg(2+)</name>
        <dbReference type="ChEBI" id="CHEBI:18420"/>
        <label>1</label>
    </ligand>
</feature>
<feature type="binding site" evidence="1">
    <location>
        <position position="419"/>
    </location>
    <ligand>
        <name>Mg(2+)</name>
        <dbReference type="ChEBI" id="CHEBI:18420"/>
        <label>1</label>
    </ligand>
</feature>
<feature type="binding site" evidence="1">
    <location>
        <position position="462"/>
    </location>
    <ligand>
        <name>Mg(2+)</name>
        <dbReference type="ChEBI" id="CHEBI:18420"/>
        <label>1</label>
    </ligand>
</feature>
<feature type="binding site" evidence="1">
    <location>
        <position position="462"/>
    </location>
    <ligand>
        <name>substrate</name>
    </ligand>
</feature>
<feature type="binding site" evidence="1">
    <location>
        <begin position="538"/>
        <end position="541"/>
    </location>
    <ligand>
        <name>substrate</name>
    </ligand>
</feature>
<feature type="binding site" evidence="1">
    <location>
        <position position="598"/>
    </location>
    <ligand>
        <name>Mg(2+)</name>
        <dbReference type="ChEBI" id="CHEBI:18420"/>
        <label>2</label>
    </ligand>
</feature>
<feature type="binding site" evidence="1">
    <location>
        <position position="602"/>
    </location>
    <ligand>
        <name>Na(+)</name>
        <dbReference type="ChEBI" id="CHEBI:29101"/>
    </ligand>
</feature>
<feature type="binding site" evidence="1">
    <location>
        <position position="605"/>
    </location>
    <ligand>
        <name>Na(+)</name>
        <dbReference type="ChEBI" id="CHEBI:29101"/>
    </ligand>
</feature>
<feature type="binding site" evidence="1">
    <location>
        <position position="605"/>
    </location>
    <ligand>
        <name>substrate</name>
    </ligand>
</feature>
<feature type="binding site" evidence="1">
    <location>
        <position position="1000"/>
    </location>
    <ligand>
        <name>substrate</name>
    </ligand>
</feature>
<feature type="site" description="Transition state stabilizer" evidence="1">
    <location>
        <position position="358"/>
    </location>
</feature>
<feature type="site" description="Transition state stabilizer" evidence="1">
    <location>
        <position position="392"/>
    </location>
</feature>
<organism>
    <name type="scientific">Escherichia coli O1:K1 / APEC</name>
    <dbReference type="NCBI Taxonomy" id="405955"/>
    <lineage>
        <taxon>Bacteria</taxon>
        <taxon>Pseudomonadati</taxon>
        <taxon>Pseudomonadota</taxon>
        <taxon>Gammaproteobacteria</taxon>
        <taxon>Enterobacterales</taxon>
        <taxon>Enterobacteriaceae</taxon>
        <taxon>Escherichia</taxon>
    </lineage>
</organism>
<dbReference type="EC" id="3.2.1.23" evidence="1"/>
<dbReference type="EMBL" id="CP000468">
    <property type="protein sequence ID" value="ABI99820.1"/>
    <property type="molecule type" value="Genomic_DNA"/>
</dbReference>
<dbReference type="RefSeq" id="WP_000177871.1">
    <property type="nucleotide sequence ID" value="NC_008563.1"/>
</dbReference>
<dbReference type="SMR" id="A1A831"/>
<dbReference type="CAZy" id="GH2">
    <property type="family name" value="Glycoside Hydrolase Family 2"/>
</dbReference>
<dbReference type="KEGG" id="ecv:APECO1_1649"/>
<dbReference type="HOGENOM" id="CLU_002346_0_2_6"/>
<dbReference type="Proteomes" id="UP000008216">
    <property type="component" value="Chromosome"/>
</dbReference>
<dbReference type="GO" id="GO:0009341">
    <property type="term" value="C:beta-galactosidase complex"/>
    <property type="evidence" value="ECO:0007669"/>
    <property type="project" value="InterPro"/>
</dbReference>
<dbReference type="GO" id="GO:0004565">
    <property type="term" value="F:beta-galactosidase activity"/>
    <property type="evidence" value="ECO:0007669"/>
    <property type="project" value="UniProtKB-EC"/>
</dbReference>
<dbReference type="GO" id="GO:0030246">
    <property type="term" value="F:carbohydrate binding"/>
    <property type="evidence" value="ECO:0007669"/>
    <property type="project" value="InterPro"/>
</dbReference>
<dbReference type="GO" id="GO:0000287">
    <property type="term" value="F:magnesium ion binding"/>
    <property type="evidence" value="ECO:0007669"/>
    <property type="project" value="UniProtKB-UniRule"/>
</dbReference>
<dbReference type="GO" id="GO:0005990">
    <property type="term" value="P:lactose catabolic process"/>
    <property type="evidence" value="ECO:0007669"/>
    <property type="project" value="TreeGrafter"/>
</dbReference>
<dbReference type="FunFam" id="2.60.120.260:FF:000058">
    <property type="entry name" value="Beta-galactosidase"/>
    <property type="match status" value="1"/>
</dbReference>
<dbReference type="FunFam" id="2.60.40.10:FF:000680">
    <property type="entry name" value="Beta-galactosidase"/>
    <property type="match status" value="1"/>
</dbReference>
<dbReference type="FunFam" id="2.60.40.10:FF:000850">
    <property type="entry name" value="Beta-galactosidase"/>
    <property type="match status" value="1"/>
</dbReference>
<dbReference type="FunFam" id="2.70.98.10:FF:000006">
    <property type="entry name" value="Beta-galactosidase"/>
    <property type="match status" value="1"/>
</dbReference>
<dbReference type="FunFam" id="3.20.20.80:FF:000018">
    <property type="entry name" value="Beta-galactosidase"/>
    <property type="match status" value="1"/>
</dbReference>
<dbReference type="Gene3D" id="2.70.98.10">
    <property type="match status" value="1"/>
</dbReference>
<dbReference type="Gene3D" id="2.60.120.260">
    <property type="entry name" value="Galactose-binding domain-like"/>
    <property type="match status" value="1"/>
</dbReference>
<dbReference type="Gene3D" id="3.20.20.80">
    <property type="entry name" value="Glycosidases"/>
    <property type="match status" value="1"/>
</dbReference>
<dbReference type="Gene3D" id="2.60.40.10">
    <property type="entry name" value="Immunoglobulins"/>
    <property type="match status" value="2"/>
</dbReference>
<dbReference type="HAMAP" id="MF_01687">
    <property type="entry name" value="Beta_gal"/>
    <property type="match status" value="1"/>
</dbReference>
<dbReference type="InterPro" id="IPR004199">
    <property type="entry name" value="B-gal_small/dom_5"/>
</dbReference>
<dbReference type="InterPro" id="IPR050347">
    <property type="entry name" value="Bact_Beta-galactosidase"/>
</dbReference>
<dbReference type="InterPro" id="IPR036156">
    <property type="entry name" value="Beta-gal/glucu_dom_sf"/>
</dbReference>
<dbReference type="InterPro" id="IPR011013">
    <property type="entry name" value="Gal_mutarotase_sf_dom"/>
</dbReference>
<dbReference type="InterPro" id="IPR008979">
    <property type="entry name" value="Galactose-bd-like_sf"/>
</dbReference>
<dbReference type="InterPro" id="IPR014718">
    <property type="entry name" value="GH-type_carb-bd"/>
</dbReference>
<dbReference type="InterPro" id="IPR006101">
    <property type="entry name" value="Glyco_hydro_2"/>
</dbReference>
<dbReference type="InterPro" id="IPR023232">
    <property type="entry name" value="Glyco_hydro_2_AS"/>
</dbReference>
<dbReference type="InterPro" id="IPR023933">
    <property type="entry name" value="Glyco_hydro_2_beta_Galsidase"/>
</dbReference>
<dbReference type="InterPro" id="IPR006103">
    <property type="entry name" value="Glyco_hydro_2_cat"/>
</dbReference>
<dbReference type="InterPro" id="IPR023230">
    <property type="entry name" value="Glyco_hydro_2_CS"/>
</dbReference>
<dbReference type="InterPro" id="IPR006102">
    <property type="entry name" value="Glyco_hydro_2_Ig-like"/>
</dbReference>
<dbReference type="InterPro" id="IPR006104">
    <property type="entry name" value="Glyco_hydro_2_N"/>
</dbReference>
<dbReference type="InterPro" id="IPR017853">
    <property type="entry name" value="Glycoside_hydrolase_SF"/>
</dbReference>
<dbReference type="InterPro" id="IPR013783">
    <property type="entry name" value="Ig-like_fold"/>
</dbReference>
<dbReference type="InterPro" id="IPR032312">
    <property type="entry name" value="LacZ_4"/>
</dbReference>
<dbReference type="NCBIfam" id="NF007074">
    <property type="entry name" value="PRK09525.1"/>
    <property type="match status" value="1"/>
</dbReference>
<dbReference type="PANTHER" id="PTHR46323">
    <property type="entry name" value="BETA-GALACTOSIDASE"/>
    <property type="match status" value="1"/>
</dbReference>
<dbReference type="PANTHER" id="PTHR46323:SF2">
    <property type="entry name" value="BETA-GALACTOSIDASE"/>
    <property type="match status" value="1"/>
</dbReference>
<dbReference type="Pfam" id="PF02929">
    <property type="entry name" value="Bgal_small_N"/>
    <property type="match status" value="1"/>
</dbReference>
<dbReference type="Pfam" id="PF00703">
    <property type="entry name" value="Glyco_hydro_2"/>
    <property type="match status" value="1"/>
</dbReference>
<dbReference type="Pfam" id="PF02836">
    <property type="entry name" value="Glyco_hydro_2_C"/>
    <property type="match status" value="1"/>
</dbReference>
<dbReference type="Pfam" id="PF02837">
    <property type="entry name" value="Glyco_hydro_2_N"/>
    <property type="match status" value="1"/>
</dbReference>
<dbReference type="Pfam" id="PF16353">
    <property type="entry name" value="LacZ_4"/>
    <property type="match status" value="1"/>
</dbReference>
<dbReference type="PRINTS" id="PR00132">
    <property type="entry name" value="GLHYDRLASE2"/>
</dbReference>
<dbReference type="SMART" id="SM01038">
    <property type="entry name" value="Bgal_small_N"/>
    <property type="match status" value="1"/>
</dbReference>
<dbReference type="SUPFAM" id="SSF51445">
    <property type="entry name" value="(Trans)glycosidases"/>
    <property type="match status" value="1"/>
</dbReference>
<dbReference type="SUPFAM" id="SSF49303">
    <property type="entry name" value="beta-Galactosidase/glucuronidase domain"/>
    <property type="match status" value="2"/>
</dbReference>
<dbReference type="SUPFAM" id="SSF74650">
    <property type="entry name" value="Galactose mutarotase-like"/>
    <property type="match status" value="1"/>
</dbReference>
<dbReference type="SUPFAM" id="SSF49785">
    <property type="entry name" value="Galactose-binding domain-like"/>
    <property type="match status" value="1"/>
</dbReference>
<dbReference type="PROSITE" id="PS00719">
    <property type="entry name" value="GLYCOSYL_HYDROL_F2_1"/>
    <property type="match status" value="1"/>
</dbReference>
<dbReference type="PROSITE" id="PS00608">
    <property type="entry name" value="GLYCOSYL_HYDROL_F2_2"/>
    <property type="match status" value="1"/>
</dbReference>
<accession>A1A831</accession>